<evidence type="ECO:0000250" key="1">
    <source>
        <dbReference type="UniProtKB" id="Q80ZQ9"/>
    </source>
</evidence>
<evidence type="ECO:0000305" key="2"/>
<gene>
    <name type="primary">ABITRAM</name>
    <name type="synonym">FAM206A</name>
    <name type="ORF">RCJMB04_32i4</name>
</gene>
<keyword id="KW-0009">Actin-binding</keyword>
<keyword id="KW-0966">Cell projection</keyword>
<keyword id="KW-0539">Nucleus</keyword>
<keyword id="KW-1185">Reference proteome</keyword>
<dbReference type="EMBL" id="AJ721017">
    <property type="protein sequence ID" value="CAG32676.1"/>
    <property type="molecule type" value="mRNA"/>
</dbReference>
<dbReference type="RefSeq" id="NP_001006383.1">
    <property type="nucleotide sequence ID" value="NM_001006383.1"/>
</dbReference>
<dbReference type="SMR" id="Q5ZHW7"/>
<dbReference type="FunCoup" id="Q5ZHW7">
    <property type="interactions" value="1652"/>
</dbReference>
<dbReference type="STRING" id="9031.ENSGALP00000072766"/>
<dbReference type="PaxDb" id="9031-ENSGALP00000030345"/>
<dbReference type="GeneID" id="420983"/>
<dbReference type="KEGG" id="gga:420983"/>
<dbReference type="CTD" id="420983"/>
<dbReference type="VEuPathDB" id="HostDB:geneid_420983"/>
<dbReference type="eggNOG" id="KOG3266">
    <property type="taxonomic scope" value="Eukaryota"/>
</dbReference>
<dbReference type="InParanoid" id="Q5ZHW7"/>
<dbReference type="OrthoDB" id="48130at2759"/>
<dbReference type="PhylomeDB" id="Q5ZHW7"/>
<dbReference type="PRO" id="PR:Q5ZHW7"/>
<dbReference type="Proteomes" id="UP000000539">
    <property type="component" value="Unassembled WGS sequence"/>
</dbReference>
<dbReference type="GO" id="GO:0030425">
    <property type="term" value="C:dendrite"/>
    <property type="evidence" value="ECO:0000318"/>
    <property type="project" value="GO_Central"/>
</dbReference>
<dbReference type="GO" id="GO:0032433">
    <property type="term" value="C:filopodium tip"/>
    <property type="evidence" value="ECO:0000250"/>
    <property type="project" value="UniProtKB"/>
</dbReference>
<dbReference type="GO" id="GO:0030426">
    <property type="term" value="C:growth cone"/>
    <property type="evidence" value="ECO:0000250"/>
    <property type="project" value="UniProtKB"/>
</dbReference>
<dbReference type="GO" id="GO:0030027">
    <property type="term" value="C:lamellipodium"/>
    <property type="evidence" value="ECO:0000250"/>
    <property type="project" value="UniProtKB"/>
</dbReference>
<dbReference type="GO" id="GO:0016607">
    <property type="term" value="C:nuclear speck"/>
    <property type="evidence" value="ECO:0007669"/>
    <property type="project" value="UniProtKB-SubCell"/>
</dbReference>
<dbReference type="GO" id="GO:0005634">
    <property type="term" value="C:nucleus"/>
    <property type="evidence" value="ECO:0000318"/>
    <property type="project" value="GO_Central"/>
</dbReference>
<dbReference type="GO" id="GO:0051015">
    <property type="term" value="F:actin filament binding"/>
    <property type="evidence" value="ECO:0000318"/>
    <property type="project" value="GO_Central"/>
</dbReference>
<dbReference type="GO" id="GO:0003785">
    <property type="term" value="F:actin monomer binding"/>
    <property type="evidence" value="ECO:0000318"/>
    <property type="project" value="GO_Central"/>
</dbReference>
<dbReference type="GO" id="GO:0048813">
    <property type="term" value="P:dendrite morphogenesis"/>
    <property type="evidence" value="ECO:0000250"/>
    <property type="project" value="UniProtKB"/>
</dbReference>
<dbReference type="GO" id="GO:0030833">
    <property type="term" value="P:regulation of actin filament polymerization"/>
    <property type="evidence" value="ECO:0000250"/>
    <property type="project" value="UniProtKB"/>
</dbReference>
<dbReference type="GO" id="GO:0051489">
    <property type="term" value="P:regulation of filopodium assembly"/>
    <property type="evidence" value="ECO:0000250"/>
    <property type="project" value="UniProtKB"/>
</dbReference>
<dbReference type="FunFam" id="2.40.50.100:FF:000048">
    <property type="entry name" value="Protein Abitram"/>
    <property type="match status" value="1"/>
</dbReference>
<dbReference type="Gene3D" id="2.40.50.100">
    <property type="match status" value="1"/>
</dbReference>
<dbReference type="InterPro" id="IPR039169">
    <property type="entry name" value="Abitram"/>
</dbReference>
<dbReference type="InterPro" id="IPR033753">
    <property type="entry name" value="GCV_H/Fam206"/>
</dbReference>
<dbReference type="InterPro" id="IPR011053">
    <property type="entry name" value="Single_hybrid_motif"/>
</dbReference>
<dbReference type="PANTHER" id="PTHR13651">
    <property type="entry name" value="PROTEIN ABITRAM"/>
    <property type="match status" value="1"/>
</dbReference>
<dbReference type="PANTHER" id="PTHR13651:SF0">
    <property type="entry name" value="PROTEIN ABITRAM"/>
    <property type="match status" value="1"/>
</dbReference>
<dbReference type="Pfam" id="PF01597">
    <property type="entry name" value="GCV_H"/>
    <property type="match status" value="1"/>
</dbReference>
<dbReference type="SUPFAM" id="SSF51230">
    <property type="entry name" value="Single hybrid motif"/>
    <property type="match status" value="1"/>
</dbReference>
<organism>
    <name type="scientific">Gallus gallus</name>
    <name type="common">Chicken</name>
    <dbReference type="NCBI Taxonomy" id="9031"/>
    <lineage>
        <taxon>Eukaryota</taxon>
        <taxon>Metazoa</taxon>
        <taxon>Chordata</taxon>
        <taxon>Craniata</taxon>
        <taxon>Vertebrata</taxon>
        <taxon>Euteleostomi</taxon>
        <taxon>Archelosauria</taxon>
        <taxon>Archosauria</taxon>
        <taxon>Dinosauria</taxon>
        <taxon>Saurischia</taxon>
        <taxon>Theropoda</taxon>
        <taxon>Coelurosauria</taxon>
        <taxon>Aves</taxon>
        <taxon>Neognathae</taxon>
        <taxon>Galloanserae</taxon>
        <taxon>Galliformes</taxon>
        <taxon>Phasianidae</taxon>
        <taxon>Phasianinae</taxon>
        <taxon>Gallus</taxon>
    </lineage>
</organism>
<accession>Q5ZHW7</accession>
<name>ABITM_CHICK</name>
<comment type="function">
    <text evidence="1">Actin-binding protein that regulates actin polymerization, filopodia dynamics and increases the branching of proximal dendrites of developing neurons.</text>
</comment>
<comment type="subcellular location">
    <subcellularLocation>
        <location evidence="1">Nucleus speckle</location>
    </subcellularLocation>
    <subcellularLocation>
        <location evidence="1">Cell projection</location>
        <location evidence="1">Lamellipodium</location>
    </subcellularLocation>
    <subcellularLocation>
        <location evidence="1">Nucleus</location>
    </subcellularLocation>
    <subcellularLocation>
        <location evidence="1">Cell projection</location>
        <location evidence="1">Growth cone</location>
    </subcellularLocation>
    <subcellularLocation>
        <location evidence="1">Cell projection</location>
        <location evidence="1">Dendrite</location>
    </subcellularLocation>
    <text evidence="1">Localizes to somata and dendrites in cortical neurons. Colocalizes with actin in lamellipodia.</text>
</comment>
<comment type="similarity">
    <text evidence="2">Belongs to the ABITRAM family.</text>
</comment>
<protein>
    <recommendedName>
        <fullName evidence="2">Protein Abitram</fullName>
    </recommendedName>
    <alternativeName>
        <fullName>Actin-binding transcription modulator</fullName>
    </alternativeName>
    <alternativeName>
        <fullName>Protein Simiate</fullName>
    </alternativeName>
</protein>
<reference key="1">
    <citation type="journal article" date="2005" name="Genome Biol.">
        <title>Full-length cDNAs from chicken bursal lymphocytes to facilitate gene function analysis.</title>
        <authorList>
            <person name="Caldwell R.B."/>
            <person name="Kierzek A.M."/>
            <person name="Arakawa H."/>
            <person name="Bezzubov Y."/>
            <person name="Zaim J."/>
            <person name="Fiedler P."/>
            <person name="Kutter S."/>
            <person name="Blagodatski A."/>
            <person name="Kostovska D."/>
            <person name="Koter M."/>
            <person name="Plachy J."/>
            <person name="Carninci P."/>
            <person name="Hayashizaki Y."/>
            <person name="Buerstedde J.-M."/>
        </authorList>
    </citation>
    <scope>NUCLEOTIDE SEQUENCE [LARGE SCALE MRNA]</scope>
    <source>
        <strain>CB</strain>
        <tissue>Bursa of Fabricius</tissue>
    </source>
</reference>
<proteinExistence type="evidence at transcript level"/>
<sequence>MAAAEALGAARYFTRWYKADVKGRPCEDFCVLQHSNRICVITLAEAHPLLQPGKTITSINYQISPNCSRLQNKVSGKSKRGAQFLTELAPLCRIASSDGEEYTIYSFIRGRLIEVNENILSNPALLQEKPSTEGYIAVVLPKFEESKSVTQGLLTPEEYKEVLLKRQNSSSGS</sequence>
<feature type="chain" id="PRO_0000291931" description="Protein Abitram">
    <location>
        <begin position="1"/>
        <end position="173"/>
    </location>
</feature>